<proteinExistence type="inferred from homology"/>
<accession>Q39XN8</accession>
<organism>
    <name type="scientific">Geobacter metallireducens (strain ATCC 53774 / DSM 7210 / GS-15)</name>
    <dbReference type="NCBI Taxonomy" id="269799"/>
    <lineage>
        <taxon>Bacteria</taxon>
        <taxon>Pseudomonadati</taxon>
        <taxon>Thermodesulfobacteriota</taxon>
        <taxon>Desulfuromonadia</taxon>
        <taxon>Geobacterales</taxon>
        <taxon>Geobacteraceae</taxon>
        <taxon>Geobacter</taxon>
    </lineage>
</organism>
<name>RUVC_GEOMG</name>
<keyword id="KW-0963">Cytoplasm</keyword>
<keyword id="KW-0227">DNA damage</keyword>
<keyword id="KW-0233">DNA recombination</keyword>
<keyword id="KW-0234">DNA repair</keyword>
<keyword id="KW-0238">DNA-binding</keyword>
<keyword id="KW-0255">Endonuclease</keyword>
<keyword id="KW-0378">Hydrolase</keyword>
<keyword id="KW-0460">Magnesium</keyword>
<keyword id="KW-0479">Metal-binding</keyword>
<keyword id="KW-0540">Nuclease</keyword>
<keyword id="KW-1185">Reference proteome</keyword>
<protein>
    <recommendedName>
        <fullName evidence="1">Crossover junction endodeoxyribonuclease RuvC</fullName>
        <ecNumber evidence="1">3.1.21.10</ecNumber>
    </recommendedName>
    <alternativeName>
        <fullName evidence="1">Holliday junction nuclease RuvC</fullName>
    </alternativeName>
    <alternativeName>
        <fullName evidence="1">Holliday junction resolvase RuvC</fullName>
    </alternativeName>
</protein>
<reference key="1">
    <citation type="journal article" date="2009" name="BMC Microbiol.">
        <title>The genome sequence of Geobacter metallireducens: features of metabolism, physiology and regulation common and dissimilar to Geobacter sulfurreducens.</title>
        <authorList>
            <person name="Aklujkar M."/>
            <person name="Krushkal J."/>
            <person name="DiBartolo G."/>
            <person name="Lapidus A."/>
            <person name="Land M.L."/>
            <person name="Lovley D.R."/>
        </authorList>
    </citation>
    <scope>NUCLEOTIDE SEQUENCE [LARGE SCALE GENOMIC DNA]</scope>
    <source>
        <strain>ATCC 53774 / DSM 7210 / GS-15</strain>
    </source>
</reference>
<comment type="function">
    <text evidence="1">The RuvA-RuvB-RuvC complex processes Holliday junction (HJ) DNA during genetic recombination and DNA repair. Endonuclease that resolves HJ intermediates. Cleaves cruciform DNA by making single-stranded nicks across the HJ at symmetrical positions within the homologous arms, yielding a 5'-phosphate and a 3'-hydroxyl group; requires a central core of homology in the junction. The consensus cleavage sequence is 5'-(A/T)TT(C/G)-3'. Cleavage occurs on the 3'-side of the TT dinucleotide at the point of strand exchange. HJ branch migration catalyzed by RuvA-RuvB allows RuvC to scan DNA until it finds its consensus sequence, where it cleaves and resolves the cruciform DNA.</text>
</comment>
<comment type="catalytic activity">
    <reaction evidence="1">
        <text>Endonucleolytic cleavage at a junction such as a reciprocal single-stranded crossover between two homologous DNA duplexes (Holliday junction).</text>
        <dbReference type="EC" id="3.1.21.10"/>
    </reaction>
</comment>
<comment type="cofactor">
    <cofactor evidence="1">
        <name>Mg(2+)</name>
        <dbReference type="ChEBI" id="CHEBI:18420"/>
    </cofactor>
    <text evidence="1">Binds 2 Mg(2+) ion per subunit.</text>
</comment>
<comment type="subunit">
    <text evidence="1">Homodimer which binds Holliday junction (HJ) DNA. The HJ becomes 2-fold symmetrical on binding to RuvC with unstacked arms; it has a different conformation from HJ DNA in complex with RuvA. In the full resolvosome a probable DNA-RuvA(4)-RuvB(12)-RuvC(2) complex forms which resolves the HJ.</text>
</comment>
<comment type="subcellular location">
    <subcellularLocation>
        <location evidence="1">Cytoplasm</location>
    </subcellularLocation>
</comment>
<comment type="similarity">
    <text evidence="1">Belongs to the RuvC family.</text>
</comment>
<sequence length="164" mass="17632">MRVLGIDPGSRITGYGIIEKVGNRLVHVDNGAIHTDNHKEFALRLHRIFEGLCEVIAEYRPDAMAVEQVFLAHNAQSALKLGQARGAAIVAGVNAGLPVSEYTAMQVKQAVVGYGHARKEQVQQMVKSLLNLPEIAQADASDALAVAVCHANSAGMKNILRSIR</sequence>
<evidence type="ECO:0000255" key="1">
    <source>
        <dbReference type="HAMAP-Rule" id="MF_00034"/>
    </source>
</evidence>
<feature type="chain" id="PRO_1000002760" description="Crossover junction endodeoxyribonuclease RuvC">
    <location>
        <begin position="1"/>
        <end position="164"/>
    </location>
</feature>
<feature type="active site" evidence="1">
    <location>
        <position position="7"/>
    </location>
</feature>
<feature type="active site" evidence="1">
    <location>
        <position position="67"/>
    </location>
</feature>
<feature type="active site" evidence="1">
    <location>
        <position position="139"/>
    </location>
</feature>
<feature type="binding site" evidence="1">
    <location>
        <position position="7"/>
    </location>
    <ligand>
        <name>Mg(2+)</name>
        <dbReference type="ChEBI" id="CHEBI:18420"/>
        <label>1</label>
    </ligand>
</feature>
<feature type="binding site" evidence="1">
    <location>
        <position position="67"/>
    </location>
    <ligand>
        <name>Mg(2+)</name>
        <dbReference type="ChEBI" id="CHEBI:18420"/>
        <label>2</label>
    </ligand>
</feature>
<feature type="binding site" evidence="1">
    <location>
        <position position="139"/>
    </location>
    <ligand>
        <name>Mg(2+)</name>
        <dbReference type="ChEBI" id="CHEBI:18420"/>
        <label>1</label>
    </ligand>
</feature>
<gene>
    <name evidence="1" type="primary">ruvC</name>
    <name type="ordered locus">Gmet_0744</name>
</gene>
<dbReference type="EC" id="3.1.21.10" evidence="1"/>
<dbReference type="EMBL" id="CP000148">
    <property type="protein sequence ID" value="ABB30986.1"/>
    <property type="molecule type" value="Genomic_DNA"/>
</dbReference>
<dbReference type="RefSeq" id="WP_004514461.1">
    <property type="nucleotide sequence ID" value="NC_007517.1"/>
</dbReference>
<dbReference type="SMR" id="Q39XN8"/>
<dbReference type="STRING" id="269799.Gmet_0744"/>
<dbReference type="KEGG" id="gme:Gmet_0744"/>
<dbReference type="eggNOG" id="COG0817">
    <property type="taxonomic scope" value="Bacteria"/>
</dbReference>
<dbReference type="HOGENOM" id="CLU_091257_3_1_7"/>
<dbReference type="Proteomes" id="UP000007073">
    <property type="component" value="Chromosome"/>
</dbReference>
<dbReference type="GO" id="GO:0005737">
    <property type="term" value="C:cytoplasm"/>
    <property type="evidence" value="ECO:0007669"/>
    <property type="project" value="UniProtKB-SubCell"/>
</dbReference>
<dbReference type="GO" id="GO:0048476">
    <property type="term" value="C:Holliday junction resolvase complex"/>
    <property type="evidence" value="ECO:0007669"/>
    <property type="project" value="UniProtKB-UniRule"/>
</dbReference>
<dbReference type="GO" id="GO:0008821">
    <property type="term" value="F:crossover junction DNA endonuclease activity"/>
    <property type="evidence" value="ECO:0007669"/>
    <property type="project" value="UniProtKB-UniRule"/>
</dbReference>
<dbReference type="GO" id="GO:0003677">
    <property type="term" value="F:DNA binding"/>
    <property type="evidence" value="ECO:0007669"/>
    <property type="project" value="UniProtKB-KW"/>
</dbReference>
<dbReference type="GO" id="GO:0000287">
    <property type="term" value="F:magnesium ion binding"/>
    <property type="evidence" value="ECO:0007669"/>
    <property type="project" value="UniProtKB-UniRule"/>
</dbReference>
<dbReference type="GO" id="GO:0006310">
    <property type="term" value="P:DNA recombination"/>
    <property type="evidence" value="ECO:0007669"/>
    <property type="project" value="UniProtKB-UniRule"/>
</dbReference>
<dbReference type="GO" id="GO:0006281">
    <property type="term" value="P:DNA repair"/>
    <property type="evidence" value="ECO:0007669"/>
    <property type="project" value="UniProtKB-UniRule"/>
</dbReference>
<dbReference type="CDD" id="cd16962">
    <property type="entry name" value="RuvC"/>
    <property type="match status" value="1"/>
</dbReference>
<dbReference type="FunFam" id="3.30.420.10:FF:000002">
    <property type="entry name" value="Crossover junction endodeoxyribonuclease RuvC"/>
    <property type="match status" value="1"/>
</dbReference>
<dbReference type="Gene3D" id="3.30.420.10">
    <property type="entry name" value="Ribonuclease H-like superfamily/Ribonuclease H"/>
    <property type="match status" value="1"/>
</dbReference>
<dbReference type="HAMAP" id="MF_00034">
    <property type="entry name" value="RuvC"/>
    <property type="match status" value="1"/>
</dbReference>
<dbReference type="InterPro" id="IPR012337">
    <property type="entry name" value="RNaseH-like_sf"/>
</dbReference>
<dbReference type="InterPro" id="IPR036397">
    <property type="entry name" value="RNaseH_sf"/>
</dbReference>
<dbReference type="InterPro" id="IPR020563">
    <property type="entry name" value="X-over_junc_endoDNase_Mg_BS"/>
</dbReference>
<dbReference type="InterPro" id="IPR002176">
    <property type="entry name" value="X-over_junc_endoDNase_RuvC"/>
</dbReference>
<dbReference type="NCBIfam" id="NF000711">
    <property type="entry name" value="PRK00039.2-1"/>
    <property type="match status" value="1"/>
</dbReference>
<dbReference type="NCBIfam" id="TIGR00228">
    <property type="entry name" value="ruvC"/>
    <property type="match status" value="1"/>
</dbReference>
<dbReference type="PANTHER" id="PTHR30194">
    <property type="entry name" value="CROSSOVER JUNCTION ENDODEOXYRIBONUCLEASE RUVC"/>
    <property type="match status" value="1"/>
</dbReference>
<dbReference type="PANTHER" id="PTHR30194:SF3">
    <property type="entry name" value="CROSSOVER JUNCTION ENDODEOXYRIBONUCLEASE RUVC"/>
    <property type="match status" value="1"/>
</dbReference>
<dbReference type="Pfam" id="PF02075">
    <property type="entry name" value="RuvC"/>
    <property type="match status" value="1"/>
</dbReference>
<dbReference type="PRINTS" id="PR00696">
    <property type="entry name" value="RSOLVASERUVC"/>
</dbReference>
<dbReference type="SUPFAM" id="SSF53098">
    <property type="entry name" value="Ribonuclease H-like"/>
    <property type="match status" value="1"/>
</dbReference>
<dbReference type="PROSITE" id="PS01321">
    <property type="entry name" value="RUVC"/>
    <property type="match status" value="1"/>
</dbReference>